<accession>Q5L0J2</accession>
<organism>
    <name type="scientific">Geobacillus kaustophilus (strain HTA426)</name>
    <dbReference type="NCBI Taxonomy" id="235909"/>
    <lineage>
        <taxon>Bacteria</taxon>
        <taxon>Bacillati</taxon>
        <taxon>Bacillota</taxon>
        <taxon>Bacilli</taxon>
        <taxon>Bacillales</taxon>
        <taxon>Anoxybacillaceae</taxon>
        <taxon>Geobacillus</taxon>
        <taxon>Geobacillus thermoleovorans group</taxon>
    </lineage>
</organism>
<evidence type="ECO:0000255" key="1">
    <source>
        <dbReference type="HAMAP-Rule" id="MF_01077"/>
    </source>
</evidence>
<name>RIMP_GEOKA</name>
<feature type="chain" id="PRO_0000229239" description="Ribosome maturation factor RimP">
    <location>
        <begin position="1"/>
        <end position="157"/>
    </location>
</feature>
<reference key="1">
    <citation type="journal article" date="2004" name="Nucleic Acids Res.">
        <title>Thermoadaptation trait revealed by the genome sequence of thermophilic Geobacillus kaustophilus.</title>
        <authorList>
            <person name="Takami H."/>
            <person name="Takaki Y."/>
            <person name="Chee G.-J."/>
            <person name="Nishi S."/>
            <person name="Shimamura S."/>
            <person name="Suzuki H."/>
            <person name="Matsui S."/>
            <person name="Uchiyama I."/>
        </authorList>
    </citation>
    <scope>NUCLEOTIDE SEQUENCE [LARGE SCALE GENOMIC DNA]</scope>
    <source>
        <strain>HTA426</strain>
    </source>
</reference>
<comment type="function">
    <text evidence="1">Required for maturation of 30S ribosomal subunits.</text>
</comment>
<comment type="subcellular location">
    <subcellularLocation>
        <location evidence="1">Cytoplasm</location>
    </subcellularLocation>
</comment>
<comment type="similarity">
    <text evidence="1">Belongs to the RimP family.</text>
</comment>
<sequence length="157" mass="17646">MSKKVTETVEQLVTPILDEMGLELVDIEYVKEGKNWFLRVFIDSDDGVDIEQCGAVSEKLSEKLDEVDPIPHNYFLEVSSPGAERPLKKAKDFAKAIGKNVYIKTYEPIEGEKQFEGELTAFDGTTVTLLVKDRGRQKTVAIPYEKVASARLAVIFF</sequence>
<proteinExistence type="inferred from homology"/>
<protein>
    <recommendedName>
        <fullName evidence="1">Ribosome maturation factor RimP</fullName>
    </recommendedName>
</protein>
<dbReference type="EMBL" id="BA000043">
    <property type="protein sequence ID" value="BAD75544.1"/>
    <property type="molecule type" value="Genomic_DNA"/>
</dbReference>
<dbReference type="RefSeq" id="WP_011230759.1">
    <property type="nucleotide sequence ID" value="NC_006510.1"/>
</dbReference>
<dbReference type="SMR" id="Q5L0J2"/>
<dbReference type="STRING" id="235909.GK1259"/>
<dbReference type="GeneID" id="32063153"/>
<dbReference type="KEGG" id="gka:GK1259"/>
<dbReference type="eggNOG" id="COG0779">
    <property type="taxonomic scope" value="Bacteria"/>
</dbReference>
<dbReference type="HOGENOM" id="CLU_070525_2_0_9"/>
<dbReference type="Proteomes" id="UP000001172">
    <property type="component" value="Chromosome"/>
</dbReference>
<dbReference type="GO" id="GO:0005829">
    <property type="term" value="C:cytosol"/>
    <property type="evidence" value="ECO:0007669"/>
    <property type="project" value="TreeGrafter"/>
</dbReference>
<dbReference type="GO" id="GO:0000028">
    <property type="term" value="P:ribosomal small subunit assembly"/>
    <property type="evidence" value="ECO:0007669"/>
    <property type="project" value="TreeGrafter"/>
</dbReference>
<dbReference type="GO" id="GO:0006412">
    <property type="term" value="P:translation"/>
    <property type="evidence" value="ECO:0007669"/>
    <property type="project" value="TreeGrafter"/>
</dbReference>
<dbReference type="CDD" id="cd01734">
    <property type="entry name" value="YlxS_C"/>
    <property type="match status" value="1"/>
</dbReference>
<dbReference type="FunFam" id="3.30.300.70:FF:000001">
    <property type="entry name" value="Ribosome maturation factor RimP"/>
    <property type="match status" value="1"/>
</dbReference>
<dbReference type="Gene3D" id="2.30.30.180">
    <property type="entry name" value="Ribosome maturation factor RimP, C-terminal domain"/>
    <property type="match status" value="1"/>
</dbReference>
<dbReference type="Gene3D" id="3.30.300.70">
    <property type="entry name" value="RimP-like superfamily, N-terminal"/>
    <property type="match status" value="1"/>
</dbReference>
<dbReference type="HAMAP" id="MF_01077">
    <property type="entry name" value="RimP"/>
    <property type="match status" value="1"/>
</dbReference>
<dbReference type="InterPro" id="IPR003728">
    <property type="entry name" value="Ribosome_maturation_RimP"/>
</dbReference>
<dbReference type="InterPro" id="IPR028998">
    <property type="entry name" value="RimP_C"/>
</dbReference>
<dbReference type="InterPro" id="IPR036847">
    <property type="entry name" value="RimP_C_sf"/>
</dbReference>
<dbReference type="InterPro" id="IPR028989">
    <property type="entry name" value="RimP_N"/>
</dbReference>
<dbReference type="InterPro" id="IPR035956">
    <property type="entry name" value="RimP_N_sf"/>
</dbReference>
<dbReference type="NCBIfam" id="NF000928">
    <property type="entry name" value="PRK00092.1-2"/>
    <property type="match status" value="1"/>
</dbReference>
<dbReference type="PANTHER" id="PTHR33867">
    <property type="entry name" value="RIBOSOME MATURATION FACTOR RIMP"/>
    <property type="match status" value="1"/>
</dbReference>
<dbReference type="PANTHER" id="PTHR33867:SF1">
    <property type="entry name" value="RIBOSOME MATURATION FACTOR RIMP"/>
    <property type="match status" value="1"/>
</dbReference>
<dbReference type="Pfam" id="PF17384">
    <property type="entry name" value="DUF150_C"/>
    <property type="match status" value="1"/>
</dbReference>
<dbReference type="Pfam" id="PF02576">
    <property type="entry name" value="RimP_N"/>
    <property type="match status" value="1"/>
</dbReference>
<dbReference type="SUPFAM" id="SSF74942">
    <property type="entry name" value="YhbC-like, C-terminal domain"/>
    <property type="match status" value="1"/>
</dbReference>
<dbReference type="SUPFAM" id="SSF75420">
    <property type="entry name" value="YhbC-like, N-terminal domain"/>
    <property type="match status" value="1"/>
</dbReference>
<gene>
    <name evidence="1" type="primary">rimP</name>
    <name type="ordered locus">GK1259</name>
</gene>
<keyword id="KW-0963">Cytoplasm</keyword>
<keyword id="KW-1185">Reference proteome</keyword>
<keyword id="KW-0690">Ribosome biogenesis</keyword>